<dbReference type="EC" id="5.4.99.12" evidence="1"/>
<dbReference type="EMBL" id="BX248355">
    <property type="protein sequence ID" value="CAE49063.1"/>
    <property type="status" value="ALT_INIT"/>
    <property type="molecule type" value="Genomic_DNA"/>
</dbReference>
<dbReference type="RefSeq" id="WP_014301449.1">
    <property type="nucleotide sequence ID" value="NC_002935.2"/>
</dbReference>
<dbReference type="SMR" id="P60349"/>
<dbReference type="STRING" id="257309.DIP0551"/>
<dbReference type="KEGG" id="cdi:DIP0551"/>
<dbReference type="HOGENOM" id="CLU_014673_0_2_11"/>
<dbReference type="Proteomes" id="UP000002198">
    <property type="component" value="Chromosome"/>
</dbReference>
<dbReference type="GO" id="GO:0003723">
    <property type="term" value="F:RNA binding"/>
    <property type="evidence" value="ECO:0007669"/>
    <property type="project" value="InterPro"/>
</dbReference>
<dbReference type="GO" id="GO:0160147">
    <property type="term" value="F:tRNA pseudouridine(38-40) synthase activity"/>
    <property type="evidence" value="ECO:0007669"/>
    <property type="project" value="UniProtKB-EC"/>
</dbReference>
<dbReference type="GO" id="GO:0031119">
    <property type="term" value="P:tRNA pseudouridine synthesis"/>
    <property type="evidence" value="ECO:0007669"/>
    <property type="project" value="UniProtKB-UniRule"/>
</dbReference>
<dbReference type="CDD" id="cd02570">
    <property type="entry name" value="PseudoU_synth_EcTruA"/>
    <property type="match status" value="1"/>
</dbReference>
<dbReference type="FunFam" id="3.30.70.580:FF:000001">
    <property type="entry name" value="tRNA pseudouridine synthase A"/>
    <property type="match status" value="1"/>
</dbReference>
<dbReference type="Gene3D" id="3.30.70.660">
    <property type="entry name" value="Pseudouridine synthase I, catalytic domain, C-terminal subdomain"/>
    <property type="match status" value="1"/>
</dbReference>
<dbReference type="Gene3D" id="3.30.70.580">
    <property type="entry name" value="Pseudouridine synthase I, catalytic domain, N-terminal subdomain"/>
    <property type="match status" value="1"/>
</dbReference>
<dbReference type="HAMAP" id="MF_00171">
    <property type="entry name" value="TruA"/>
    <property type="match status" value="1"/>
</dbReference>
<dbReference type="InterPro" id="IPR020103">
    <property type="entry name" value="PsdUridine_synth_cat_dom_sf"/>
</dbReference>
<dbReference type="InterPro" id="IPR001406">
    <property type="entry name" value="PsdUridine_synth_TruA"/>
</dbReference>
<dbReference type="InterPro" id="IPR020097">
    <property type="entry name" value="PsdUridine_synth_TruA_a/b_dom"/>
</dbReference>
<dbReference type="InterPro" id="IPR020095">
    <property type="entry name" value="PsdUridine_synth_TruA_C"/>
</dbReference>
<dbReference type="InterPro" id="IPR020094">
    <property type="entry name" value="TruA/RsuA/RluB/E/F_N"/>
</dbReference>
<dbReference type="NCBIfam" id="TIGR00071">
    <property type="entry name" value="hisT_truA"/>
    <property type="match status" value="1"/>
</dbReference>
<dbReference type="PANTHER" id="PTHR11142">
    <property type="entry name" value="PSEUDOURIDYLATE SYNTHASE"/>
    <property type="match status" value="1"/>
</dbReference>
<dbReference type="PANTHER" id="PTHR11142:SF0">
    <property type="entry name" value="TRNA PSEUDOURIDINE SYNTHASE-LIKE 1"/>
    <property type="match status" value="1"/>
</dbReference>
<dbReference type="Pfam" id="PF01416">
    <property type="entry name" value="PseudoU_synth_1"/>
    <property type="match status" value="2"/>
</dbReference>
<dbReference type="PIRSF" id="PIRSF001430">
    <property type="entry name" value="tRNA_psdUrid_synth"/>
    <property type="match status" value="1"/>
</dbReference>
<dbReference type="SUPFAM" id="SSF55120">
    <property type="entry name" value="Pseudouridine synthase"/>
    <property type="match status" value="1"/>
</dbReference>
<keyword id="KW-0413">Isomerase</keyword>
<keyword id="KW-1185">Reference proteome</keyword>
<keyword id="KW-0819">tRNA processing</keyword>
<gene>
    <name evidence="1" type="primary">truA</name>
    <name type="ordered locus">DIP0551</name>
</gene>
<feature type="chain" id="PRO_0000057368" description="tRNA pseudouridine synthase A">
    <location>
        <begin position="1"/>
        <end position="288"/>
    </location>
</feature>
<feature type="active site" description="Nucleophile" evidence="1">
    <location>
        <position position="58"/>
    </location>
</feature>
<feature type="binding site" evidence="1">
    <location>
        <position position="124"/>
    </location>
    <ligand>
        <name>substrate</name>
    </ligand>
</feature>
<comment type="function">
    <text evidence="1">Formation of pseudouridine at positions 38, 39 and 40 in the anticodon stem and loop of transfer RNAs.</text>
</comment>
<comment type="catalytic activity">
    <reaction evidence="1">
        <text>uridine(38/39/40) in tRNA = pseudouridine(38/39/40) in tRNA</text>
        <dbReference type="Rhea" id="RHEA:22376"/>
        <dbReference type="Rhea" id="RHEA-COMP:10085"/>
        <dbReference type="Rhea" id="RHEA-COMP:10087"/>
        <dbReference type="ChEBI" id="CHEBI:65314"/>
        <dbReference type="ChEBI" id="CHEBI:65315"/>
        <dbReference type="EC" id="5.4.99.12"/>
    </reaction>
</comment>
<comment type="subunit">
    <text evidence="1">Homodimer.</text>
</comment>
<comment type="similarity">
    <text evidence="1">Belongs to the tRNA pseudouridine synthase TruA family.</text>
</comment>
<comment type="sequence caution" evidence="2">
    <conflict type="erroneous initiation">
        <sequence resource="EMBL-CDS" id="CAE49063"/>
    </conflict>
</comment>
<evidence type="ECO:0000255" key="1">
    <source>
        <dbReference type="HAMAP-Rule" id="MF_00171"/>
    </source>
</evidence>
<evidence type="ECO:0000305" key="2"/>
<organism>
    <name type="scientific">Corynebacterium diphtheriae (strain ATCC 700971 / NCTC 13129 / Biotype gravis)</name>
    <dbReference type="NCBI Taxonomy" id="257309"/>
    <lineage>
        <taxon>Bacteria</taxon>
        <taxon>Bacillati</taxon>
        <taxon>Actinomycetota</taxon>
        <taxon>Actinomycetes</taxon>
        <taxon>Mycobacteriales</taxon>
        <taxon>Corynebacteriaceae</taxon>
        <taxon>Corynebacterium</taxon>
    </lineage>
</organism>
<sequence>MINGTVRIRLDLAYDGTDFHGWARQGDSDLRTVQKIIEDTLTLVLQRPIDLTVAGRTDAGVHATGQVAHFDVDPAALETRSIAGDPARLIRRLARLMPDDVRIHNMSFVPAEFDARFSALRRHYVYRVTTHPRGALPTRARDTAHWPRSVDISAMQAAADALIGMHDFAAFCKYREGASTIRDLQEFTWHDVSTPQEPQLYEAHVTADAFCWSMVRSLVGACLVVGEGKRADGFTEHLLGETKRSSSIPVAAACGLSLVGVDYPSDDQLGARAEQARAYRTHDELPSL</sequence>
<protein>
    <recommendedName>
        <fullName evidence="1">tRNA pseudouridine synthase A</fullName>
        <ecNumber evidence="1">5.4.99.12</ecNumber>
    </recommendedName>
    <alternativeName>
        <fullName evidence="1">tRNA pseudouridine(38-40) synthase</fullName>
    </alternativeName>
    <alternativeName>
        <fullName evidence="1">tRNA pseudouridylate synthase I</fullName>
    </alternativeName>
    <alternativeName>
        <fullName evidence="1">tRNA-uridine isomerase I</fullName>
    </alternativeName>
</protein>
<reference key="1">
    <citation type="journal article" date="2003" name="Nucleic Acids Res.">
        <title>The complete genome sequence and analysis of Corynebacterium diphtheriae NCTC13129.</title>
        <authorList>
            <person name="Cerdeno-Tarraga A.-M."/>
            <person name="Efstratiou A."/>
            <person name="Dover L.G."/>
            <person name="Holden M.T.G."/>
            <person name="Pallen M.J."/>
            <person name="Bentley S.D."/>
            <person name="Besra G.S."/>
            <person name="Churcher C.M."/>
            <person name="James K.D."/>
            <person name="De Zoysa A."/>
            <person name="Chillingworth T."/>
            <person name="Cronin A."/>
            <person name="Dowd L."/>
            <person name="Feltwell T."/>
            <person name="Hamlin N."/>
            <person name="Holroyd S."/>
            <person name="Jagels K."/>
            <person name="Moule S."/>
            <person name="Quail M.A."/>
            <person name="Rabbinowitsch E."/>
            <person name="Rutherford K.M."/>
            <person name="Thomson N.R."/>
            <person name="Unwin L."/>
            <person name="Whitehead S."/>
            <person name="Barrell B.G."/>
            <person name="Parkhill J."/>
        </authorList>
    </citation>
    <scope>NUCLEOTIDE SEQUENCE [LARGE SCALE GENOMIC DNA]</scope>
    <source>
        <strain>ATCC 700971 / NCTC 13129 / Biotype gravis</strain>
    </source>
</reference>
<proteinExistence type="inferred from homology"/>
<accession>P60349</accession>
<name>TRUA_CORDI</name>